<organism>
    <name type="scientific">Pseudomonas putida (strain ATCC 700007 / DSM 6899 / JCM 31910 / BCRC 17059 / LMG 24140 / F1)</name>
    <dbReference type="NCBI Taxonomy" id="351746"/>
    <lineage>
        <taxon>Bacteria</taxon>
        <taxon>Pseudomonadati</taxon>
        <taxon>Pseudomonadota</taxon>
        <taxon>Gammaproteobacteria</taxon>
        <taxon>Pseudomonadales</taxon>
        <taxon>Pseudomonadaceae</taxon>
        <taxon>Pseudomonas</taxon>
    </lineage>
</organism>
<evidence type="ECO:0000255" key="1">
    <source>
        <dbReference type="HAMAP-Rule" id="MF_00183"/>
    </source>
</evidence>
<reference key="1">
    <citation type="submission" date="2007-05" db="EMBL/GenBank/DDBJ databases">
        <title>Complete sequence of Pseudomonas putida F1.</title>
        <authorList>
            <consortium name="US DOE Joint Genome Institute"/>
            <person name="Copeland A."/>
            <person name="Lucas S."/>
            <person name="Lapidus A."/>
            <person name="Barry K."/>
            <person name="Detter J.C."/>
            <person name="Glavina del Rio T."/>
            <person name="Hammon N."/>
            <person name="Israni S."/>
            <person name="Dalin E."/>
            <person name="Tice H."/>
            <person name="Pitluck S."/>
            <person name="Chain P."/>
            <person name="Malfatti S."/>
            <person name="Shin M."/>
            <person name="Vergez L."/>
            <person name="Schmutz J."/>
            <person name="Larimer F."/>
            <person name="Land M."/>
            <person name="Hauser L."/>
            <person name="Kyrpides N."/>
            <person name="Lykidis A."/>
            <person name="Parales R."/>
            <person name="Richardson P."/>
        </authorList>
    </citation>
    <scope>NUCLEOTIDE SEQUENCE [LARGE SCALE GENOMIC DNA]</scope>
    <source>
        <strain>ATCC 700007 / DSM 6899 / JCM 31910 / BCRC 17059 / LMG 24140 / F1</strain>
    </source>
</reference>
<comment type="function">
    <text evidence="1">Catalyzes the NADPH-dependent rearrangement and reduction of 1-deoxy-D-xylulose-5-phosphate (DXP) to 2-C-methyl-D-erythritol 4-phosphate (MEP).</text>
</comment>
<comment type="catalytic activity">
    <reaction evidence="1">
        <text>2-C-methyl-D-erythritol 4-phosphate + NADP(+) = 1-deoxy-D-xylulose 5-phosphate + NADPH + H(+)</text>
        <dbReference type="Rhea" id="RHEA:13717"/>
        <dbReference type="ChEBI" id="CHEBI:15378"/>
        <dbReference type="ChEBI" id="CHEBI:57783"/>
        <dbReference type="ChEBI" id="CHEBI:57792"/>
        <dbReference type="ChEBI" id="CHEBI:58262"/>
        <dbReference type="ChEBI" id="CHEBI:58349"/>
        <dbReference type="EC" id="1.1.1.267"/>
    </reaction>
    <physiologicalReaction direction="right-to-left" evidence="1">
        <dbReference type="Rhea" id="RHEA:13719"/>
    </physiologicalReaction>
</comment>
<comment type="cofactor">
    <cofactor evidence="1">
        <name>Mg(2+)</name>
        <dbReference type="ChEBI" id="CHEBI:18420"/>
    </cofactor>
    <cofactor evidence="1">
        <name>Mn(2+)</name>
        <dbReference type="ChEBI" id="CHEBI:29035"/>
    </cofactor>
</comment>
<comment type="pathway">
    <text evidence="1">Isoprenoid biosynthesis; isopentenyl diphosphate biosynthesis via DXP pathway; isopentenyl diphosphate from 1-deoxy-D-xylulose 5-phosphate: step 1/6.</text>
</comment>
<comment type="similarity">
    <text evidence="1">Belongs to the DXR family.</text>
</comment>
<name>DXR_PSEP1</name>
<gene>
    <name evidence="1" type="primary">dxr</name>
    <name type="ordered locus">Pput_4180</name>
</gene>
<accession>A5W844</accession>
<protein>
    <recommendedName>
        <fullName evidence="1">1-deoxy-D-xylulose 5-phosphate reductoisomerase</fullName>
        <shortName evidence="1">DXP reductoisomerase</shortName>
        <ecNumber evidence="1">1.1.1.267</ecNumber>
    </recommendedName>
    <alternativeName>
        <fullName evidence="1">1-deoxyxylulose-5-phosphate reductoisomerase</fullName>
    </alternativeName>
    <alternativeName>
        <fullName evidence="1">2-C-methyl-D-erythritol 4-phosphate synthase</fullName>
    </alternativeName>
</protein>
<proteinExistence type="inferred from homology"/>
<feature type="chain" id="PRO_1000020292" description="1-deoxy-D-xylulose 5-phosphate reductoisomerase">
    <location>
        <begin position="1"/>
        <end position="400"/>
    </location>
</feature>
<feature type="binding site" evidence="1">
    <location>
        <position position="17"/>
    </location>
    <ligand>
        <name>NADPH</name>
        <dbReference type="ChEBI" id="CHEBI:57783"/>
    </ligand>
</feature>
<feature type="binding site" evidence="1">
    <location>
        <position position="18"/>
    </location>
    <ligand>
        <name>NADPH</name>
        <dbReference type="ChEBI" id="CHEBI:57783"/>
    </ligand>
</feature>
<feature type="binding site" evidence="1">
    <location>
        <position position="19"/>
    </location>
    <ligand>
        <name>NADPH</name>
        <dbReference type="ChEBI" id="CHEBI:57783"/>
    </ligand>
</feature>
<feature type="binding site" evidence="1">
    <location>
        <position position="20"/>
    </location>
    <ligand>
        <name>NADPH</name>
        <dbReference type="ChEBI" id="CHEBI:57783"/>
    </ligand>
</feature>
<feature type="binding site" evidence="1">
    <location>
        <position position="131"/>
    </location>
    <ligand>
        <name>NADPH</name>
        <dbReference type="ChEBI" id="CHEBI:57783"/>
    </ligand>
</feature>
<feature type="binding site" evidence="1">
    <location>
        <position position="132"/>
    </location>
    <ligand>
        <name>1-deoxy-D-xylulose 5-phosphate</name>
        <dbReference type="ChEBI" id="CHEBI:57792"/>
    </ligand>
</feature>
<feature type="binding site" evidence="1">
    <location>
        <position position="133"/>
    </location>
    <ligand>
        <name>NADPH</name>
        <dbReference type="ChEBI" id="CHEBI:57783"/>
    </ligand>
</feature>
<feature type="binding site" evidence="1">
    <location>
        <position position="157"/>
    </location>
    <ligand>
        <name>Mn(2+)</name>
        <dbReference type="ChEBI" id="CHEBI:29035"/>
    </ligand>
</feature>
<feature type="binding site" evidence="1">
    <location>
        <position position="158"/>
    </location>
    <ligand>
        <name>1-deoxy-D-xylulose 5-phosphate</name>
        <dbReference type="ChEBI" id="CHEBI:57792"/>
    </ligand>
</feature>
<feature type="binding site" evidence="1">
    <location>
        <position position="159"/>
    </location>
    <ligand>
        <name>1-deoxy-D-xylulose 5-phosphate</name>
        <dbReference type="ChEBI" id="CHEBI:57792"/>
    </ligand>
</feature>
<feature type="binding site" evidence="1">
    <location>
        <position position="159"/>
    </location>
    <ligand>
        <name>Mn(2+)</name>
        <dbReference type="ChEBI" id="CHEBI:29035"/>
    </ligand>
</feature>
<feature type="binding site" evidence="1">
    <location>
        <position position="188"/>
    </location>
    <ligand>
        <name>1-deoxy-D-xylulose 5-phosphate</name>
        <dbReference type="ChEBI" id="CHEBI:57792"/>
    </ligand>
</feature>
<feature type="binding site" evidence="1">
    <location>
        <position position="211"/>
    </location>
    <ligand>
        <name>1-deoxy-D-xylulose 5-phosphate</name>
        <dbReference type="ChEBI" id="CHEBI:57792"/>
    </ligand>
</feature>
<feature type="binding site" evidence="1">
    <location>
        <position position="217"/>
    </location>
    <ligand>
        <name>NADPH</name>
        <dbReference type="ChEBI" id="CHEBI:57783"/>
    </ligand>
</feature>
<feature type="binding site" evidence="1">
    <location>
        <position position="224"/>
    </location>
    <ligand>
        <name>1-deoxy-D-xylulose 5-phosphate</name>
        <dbReference type="ChEBI" id="CHEBI:57792"/>
    </ligand>
</feature>
<feature type="binding site" evidence="1">
    <location>
        <position position="229"/>
    </location>
    <ligand>
        <name>1-deoxy-D-xylulose 5-phosphate</name>
        <dbReference type="ChEBI" id="CHEBI:57792"/>
    </ligand>
</feature>
<feature type="binding site" evidence="1">
    <location>
        <position position="230"/>
    </location>
    <ligand>
        <name>1-deoxy-D-xylulose 5-phosphate</name>
        <dbReference type="ChEBI" id="CHEBI:57792"/>
    </ligand>
</feature>
<feature type="binding site" evidence="1">
    <location>
        <position position="233"/>
    </location>
    <ligand>
        <name>1-deoxy-D-xylulose 5-phosphate</name>
        <dbReference type="ChEBI" id="CHEBI:57792"/>
    </ligand>
</feature>
<feature type="binding site" evidence="1">
    <location>
        <position position="233"/>
    </location>
    <ligand>
        <name>Mn(2+)</name>
        <dbReference type="ChEBI" id="CHEBI:29035"/>
    </ligand>
</feature>
<dbReference type="EC" id="1.1.1.267" evidence="1"/>
<dbReference type="EMBL" id="CP000712">
    <property type="protein sequence ID" value="ABQ80304.1"/>
    <property type="molecule type" value="Genomic_DNA"/>
</dbReference>
<dbReference type="SMR" id="A5W844"/>
<dbReference type="KEGG" id="ppf:Pput_4180"/>
<dbReference type="eggNOG" id="COG0743">
    <property type="taxonomic scope" value="Bacteria"/>
</dbReference>
<dbReference type="HOGENOM" id="CLU_035714_4_0_6"/>
<dbReference type="UniPathway" id="UPA00056">
    <property type="reaction ID" value="UER00092"/>
</dbReference>
<dbReference type="GO" id="GO:0030604">
    <property type="term" value="F:1-deoxy-D-xylulose-5-phosphate reductoisomerase activity"/>
    <property type="evidence" value="ECO:0007669"/>
    <property type="project" value="UniProtKB-UniRule"/>
</dbReference>
<dbReference type="GO" id="GO:0030145">
    <property type="term" value="F:manganese ion binding"/>
    <property type="evidence" value="ECO:0007669"/>
    <property type="project" value="TreeGrafter"/>
</dbReference>
<dbReference type="GO" id="GO:0070402">
    <property type="term" value="F:NADPH binding"/>
    <property type="evidence" value="ECO:0007669"/>
    <property type="project" value="InterPro"/>
</dbReference>
<dbReference type="GO" id="GO:0051484">
    <property type="term" value="P:isopentenyl diphosphate biosynthetic process, methylerythritol 4-phosphate pathway involved in terpenoid biosynthetic process"/>
    <property type="evidence" value="ECO:0007669"/>
    <property type="project" value="TreeGrafter"/>
</dbReference>
<dbReference type="FunFam" id="1.10.1740.10:FF:000004">
    <property type="entry name" value="1-deoxy-D-xylulose 5-phosphate reductoisomerase"/>
    <property type="match status" value="1"/>
</dbReference>
<dbReference type="FunFam" id="3.40.50.720:FF:000045">
    <property type="entry name" value="1-deoxy-D-xylulose 5-phosphate reductoisomerase"/>
    <property type="match status" value="1"/>
</dbReference>
<dbReference type="Gene3D" id="1.10.1740.10">
    <property type="match status" value="1"/>
</dbReference>
<dbReference type="Gene3D" id="3.40.50.720">
    <property type="entry name" value="NAD(P)-binding Rossmann-like Domain"/>
    <property type="match status" value="1"/>
</dbReference>
<dbReference type="HAMAP" id="MF_00183">
    <property type="entry name" value="DXP_reductoisom"/>
    <property type="match status" value="1"/>
</dbReference>
<dbReference type="InterPro" id="IPR003821">
    <property type="entry name" value="DXP_reductoisomerase"/>
</dbReference>
<dbReference type="InterPro" id="IPR013644">
    <property type="entry name" value="DXP_reductoisomerase_C"/>
</dbReference>
<dbReference type="InterPro" id="IPR013512">
    <property type="entry name" value="DXP_reductoisomerase_N"/>
</dbReference>
<dbReference type="InterPro" id="IPR026877">
    <property type="entry name" value="DXPR_C"/>
</dbReference>
<dbReference type="InterPro" id="IPR036169">
    <property type="entry name" value="DXPR_C_sf"/>
</dbReference>
<dbReference type="InterPro" id="IPR036291">
    <property type="entry name" value="NAD(P)-bd_dom_sf"/>
</dbReference>
<dbReference type="NCBIfam" id="TIGR00243">
    <property type="entry name" value="Dxr"/>
    <property type="match status" value="1"/>
</dbReference>
<dbReference type="NCBIfam" id="NF003938">
    <property type="entry name" value="PRK05447.1-1"/>
    <property type="match status" value="1"/>
</dbReference>
<dbReference type="NCBIfam" id="NF009114">
    <property type="entry name" value="PRK12464.1"/>
    <property type="match status" value="1"/>
</dbReference>
<dbReference type="PANTHER" id="PTHR30525">
    <property type="entry name" value="1-DEOXY-D-XYLULOSE 5-PHOSPHATE REDUCTOISOMERASE"/>
    <property type="match status" value="1"/>
</dbReference>
<dbReference type="PANTHER" id="PTHR30525:SF0">
    <property type="entry name" value="1-DEOXY-D-XYLULOSE 5-PHOSPHATE REDUCTOISOMERASE, CHLOROPLASTIC"/>
    <property type="match status" value="1"/>
</dbReference>
<dbReference type="Pfam" id="PF08436">
    <property type="entry name" value="DXP_redisom_C"/>
    <property type="match status" value="1"/>
</dbReference>
<dbReference type="Pfam" id="PF02670">
    <property type="entry name" value="DXP_reductoisom"/>
    <property type="match status" value="1"/>
</dbReference>
<dbReference type="Pfam" id="PF13288">
    <property type="entry name" value="DXPR_C"/>
    <property type="match status" value="1"/>
</dbReference>
<dbReference type="PIRSF" id="PIRSF006205">
    <property type="entry name" value="Dxp_reductismrs"/>
    <property type="match status" value="1"/>
</dbReference>
<dbReference type="SUPFAM" id="SSF69055">
    <property type="entry name" value="1-deoxy-D-xylulose-5-phosphate reductoisomerase, C-terminal domain"/>
    <property type="match status" value="1"/>
</dbReference>
<dbReference type="SUPFAM" id="SSF55347">
    <property type="entry name" value="Glyceraldehyde-3-phosphate dehydrogenase-like, C-terminal domain"/>
    <property type="match status" value="1"/>
</dbReference>
<dbReference type="SUPFAM" id="SSF51735">
    <property type="entry name" value="NAD(P)-binding Rossmann-fold domains"/>
    <property type="match status" value="1"/>
</dbReference>
<keyword id="KW-0414">Isoprene biosynthesis</keyword>
<keyword id="KW-0464">Manganese</keyword>
<keyword id="KW-0479">Metal-binding</keyword>
<keyword id="KW-0521">NADP</keyword>
<keyword id="KW-0560">Oxidoreductase</keyword>
<sequence length="400" mass="42760">MGCDVSRPQRITVLGATGSIGLSTLDVIARHPDRYQAFALTGYSRIDELLALCVRHRPAFAVVPSTEAAVRLRAGLAAAGCTTEVLEGEAGLCQVASAAEVDAVMAAIVGAAGLRPTLAAVEAGKKVLLANKEALVMSGALFMEAVRQKGAVLLPIDSEHNAIFQCMPGDYARGLSAVGVRRILLTASGGPFRETPVEALLDVTPEQACAHPNWSMGRKISVDSASMMNKGLELIEACWLFDAVPSKVEVVVHPQSVIHSLVDYVDGSVLAQLGNPDMRTPIANALAWPERIDSGVAPLDLFAIARLDFQAPDEQRFPCLRLARQAAEAGNSAPAVLNAANEVAVEAFLERRIRFPEIAGMIEQVLDQEPVVPLPSLDAVFAADQRARELSREWLRRHGR</sequence>